<keyword id="KW-0002">3D-structure</keyword>
<keyword id="KW-0020">Allergen</keyword>
<keyword id="KW-0119">Carbohydrate metabolism</keyword>
<keyword id="KW-0146">Chitin degradation</keyword>
<keyword id="KW-0147">Chitin-binding</keyword>
<keyword id="KW-0903">Direct protein sequencing</keyword>
<keyword id="KW-1015">Disulfide bond</keyword>
<keyword id="KW-0325">Glycoprotein</keyword>
<keyword id="KW-0326">Glycosidase</keyword>
<keyword id="KW-0378">Hydrolase</keyword>
<keyword id="KW-0611">Plant defense</keyword>
<keyword id="KW-0624">Polysaccharide degradation</keyword>
<keyword id="KW-1185">Reference proteome</keyword>
<keyword id="KW-0964">Secreted</keyword>
<keyword id="KW-0732">Signal</keyword>
<feature type="signal peptide" evidence="5">
    <location>
        <begin position="1"/>
        <end position="25"/>
    </location>
</feature>
<feature type="chain" id="PRO_0000005303" description="Endochitinase A">
    <location>
        <begin position="26"/>
        <end position="280"/>
    </location>
</feature>
<feature type="domain" description="Chitin-binding type-1" evidence="1">
    <location>
        <begin position="26"/>
        <end position="60"/>
    </location>
</feature>
<feature type="region of interest" description="Hinge region (poly-Gly)" evidence="16">
    <location>
        <begin position="61"/>
        <end position="77"/>
    </location>
</feature>
<feature type="region of interest" description="Catalytic" evidence="16">
    <location>
        <begin position="78"/>
        <end position="280"/>
    </location>
</feature>
<feature type="active site" description="Proton donor" evidence="17">
    <location>
        <position position="144"/>
    </location>
</feature>
<feature type="site" description="Cleavage; by F.vanettenii Extracellular metalloproteinase MEP (fungalysin)" evidence="7">
    <location>
        <begin position="29"/>
        <end position="30"/>
    </location>
</feature>
<feature type="site" description="Cleavage; by S.maydis" evidence="5">
    <location>
        <begin position="46"/>
        <end position="47"/>
    </location>
</feature>
<feature type="glycosylation site" description="N-linked (GlcNAc...) asparagine" evidence="2">
    <location>
        <position position="155"/>
    </location>
</feature>
<feature type="glycosylation site" description="N-linked (GlcNAc...) asparagine" evidence="2">
    <location>
        <position position="277"/>
    </location>
</feature>
<feature type="disulfide bond" evidence="1">
    <location>
        <begin position="28"/>
        <end position="36"/>
    </location>
</feature>
<feature type="disulfide bond" evidence="1">
    <location>
        <begin position="30"/>
        <end position="42"/>
    </location>
</feature>
<feature type="disulfide bond" evidence="1">
    <location>
        <begin position="35"/>
        <end position="49"/>
    </location>
</feature>
<feature type="disulfide bond" evidence="1">
    <location>
        <begin position="53"/>
        <end position="58"/>
    </location>
</feature>
<feature type="disulfide bond" evidence="6 22">
    <location>
        <begin position="100"/>
        <end position="149"/>
    </location>
</feature>
<feature type="disulfide bond" evidence="6 22">
    <location>
        <begin position="161"/>
        <end position="170"/>
    </location>
</feature>
<feature type="disulfide bond" evidence="6 22">
    <location>
        <begin position="248"/>
        <end position="280"/>
    </location>
</feature>
<feature type="mutagenesis site" description="Resistance to cleavage by S.maydis." evidence="5">
    <original>A</original>
    <variation>D</variation>
    <location>
        <position position="47"/>
    </location>
</feature>
<feature type="mutagenesis site" description="Loss of catalytic activity. No effect on substrate binding or overall structure of the catalytic domain." evidence="6">
    <original>E</original>
    <variation>Q</variation>
    <location>
        <position position="144"/>
    </location>
</feature>
<feature type="sequence conflict" description="In Ref. 1; AAA33444." evidence="16" ref="1">
    <original>R</original>
    <variation>G</variation>
    <location>
        <position position="229"/>
    </location>
</feature>
<feature type="sequence conflict" description="In Ref. 1; AAA33444." evidence="16" ref="1">
    <original>T</original>
    <variation>I</variation>
    <location>
        <position position="279"/>
    </location>
</feature>
<feature type="helix" evidence="23">
    <location>
        <begin position="86"/>
        <end position="93"/>
    </location>
</feature>
<feature type="turn" evidence="23">
    <location>
        <begin position="101"/>
        <end position="105"/>
    </location>
</feature>
<feature type="helix" evidence="23">
    <location>
        <begin position="108"/>
        <end position="115"/>
    </location>
</feature>
<feature type="turn" evidence="23">
    <location>
        <begin position="119"/>
        <end position="122"/>
    </location>
</feature>
<feature type="helix" evidence="23">
    <location>
        <begin position="127"/>
        <end position="145"/>
    </location>
</feature>
<feature type="turn" evidence="23">
    <location>
        <begin position="146"/>
        <end position="149"/>
    </location>
</feature>
<feature type="strand" evidence="23">
    <location>
        <begin position="164"/>
        <end position="166"/>
    </location>
</feature>
<feature type="turn" evidence="23">
    <location>
        <begin position="180"/>
        <end position="183"/>
    </location>
</feature>
<feature type="helix" evidence="23">
    <location>
        <begin position="187"/>
        <end position="197"/>
    </location>
</feature>
<feature type="turn" evidence="23">
    <location>
        <begin position="201"/>
        <end position="203"/>
    </location>
</feature>
<feature type="helix" evidence="23">
    <location>
        <begin position="207"/>
        <end position="210"/>
    </location>
</feature>
<feature type="helix" evidence="23">
    <location>
        <begin position="212"/>
        <end position="226"/>
    </location>
</feature>
<feature type="helix" evidence="23">
    <location>
        <begin position="228"/>
        <end position="233"/>
    </location>
</feature>
<feature type="helix" evidence="23">
    <location>
        <begin position="235"/>
        <end position="242"/>
    </location>
</feature>
<feature type="strand" evidence="23">
    <location>
        <begin position="246"/>
        <end position="248"/>
    </location>
</feature>
<feature type="helix" evidence="23">
    <location>
        <begin position="253"/>
        <end position="269"/>
    </location>
</feature>
<name>CHIA_MAIZE</name>
<evidence type="ECO:0000255" key="1">
    <source>
        <dbReference type="PROSITE-ProRule" id="PRU00261"/>
    </source>
</evidence>
<evidence type="ECO:0000255" key="2">
    <source>
        <dbReference type="PROSITE-ProRule" id="PRU00498"/>
    </source>
</evidence>
<evidence type="ECO:0000269" key="3">
    <source>
    </source>
</evidence>
<evidence type="ECO:0000269" key="4">
    <source>
    </source>
</evidence>
<evidence type="ECO:0000269" key="5">
    <source>
    </source>
</evidence>
<evidence type="ECO:0000269" key="6">
    <source>
    </source>
</evidence>
<evidence type="ECO:0000269" key="7">
    <source>
    </source>
</evidence>
<evidence type="ECO:0000269" key="8">
    <source>
    </source>
</evidence>
<evidence type="ECO:0000269" key="9">
    <source>
    </source>
</evidence>
<evidence type="ECO:0000269" key="10">
    <source>
    </source>
</evidence>
<evidence type="ECO:0000269" key="11">
    <source>
    </source>
</evidence>
<evidence type="ECO:0000269" key="12">
    <source ref="6"/>
</evidence>
<evidence type="ECO:0000303" key="13">
    <source>
    </source>
</evidence>
<evidence type="ECO:0000303" key="14">
    <source>
    </source>
</evidence>
<evidence type="ECO:0000303" key="15">
    <source>
    </source>
</evidence>
<evidence type="ECO:0000305" key="16"/>
<evidence type="ECO:0000305" key="17">
    <source>
    </source>
</evidence>
<evidence type="ECO:0000305" key="18">
    <source>
    </source>
</evidence>
<evidence type="ECO:0000312" key="19">
    <source>
        <dbReference type="EMBL" id="ACF85519.1"/>
    </source>
</evidence>
<evidence type="ECO:0000312" key="20">
    <source>
        <dbReference type="EMBL" id="ONM16329.1"/>
    </source>
</evidence>
<evidence type="ECO:0000312" key="21">
    <source>
        <dbReference type="Proteomes" id="UP000007305"/>
    </source>
</evidence>
<evidence type="ECO:0007744" key="22">
    <source>
        <dbReference type="PDB" id="4MCK"/>
    </source>
</evidence>
<evidence type="ECO:0007829" key="23">
    <source>
        <dbReference type="PDB" id="4MCK"/>
    </source>
</evidence>
<reference key="1">
    <citation type="journal article" date="1992" name="J. Biol. Chem.">
        <title>Antifungal proteins from plants. Purification, molecular cloning, and antifungal properties of chitinases from maize seed.</title>
        <authorList>
            <person name="Huynh Q.K."/>
            <person name="Hironaka C.M."/>
            <person name="Levine E.B."/>
            <person name="Smith C.E."/>
            <person name="Borgmeyer J.R."/>
            <person name="Shah D.M."/>
        </authorList>
    </citation>
    <scope>NUCLEOTIDE SEQUENCE [GENOMIC DNA]</scope>
    <scope>FUNCTION</scope>
    <scope>CATALYTIC ACTIVITY</scope>
    <source>
        <tissue>Seed</tissue>
    </source>
</reference>
<reference evidence="19" key="2">
    <citation type="journal article" date="2009" name="PLoS Genet.">
        <title>Sequencing, mapping, and analysis of 27,455 maize full-length cDNAs.</title>
        <authorList>
            <person name="Soderlund C."/>
            <person name="Descour A."/>
            <person name="Kudrna D."/>
            <person name="Bomhoff M."/>
            <person name="Boyd L."/>
            <person name="Currie J."/>
            <person name="Angelova A."/>
            <person name="Collura K."/>
            <person name="Wissotski M."/>
            <person name="Ashley E."/>
            <person name="Morrow D."/>
            <person name="Fernandes J."/>
            <person name="Walbot V."/>
            <person name="Yu Y."/>
        </authorList>
    </citation>
    <scope>NUCLEOTIDE SEQUENCE [LARGE SCALE MRNA]</scope>
    <source>
        <strain evidence="19">cv. B73</strain>
    </source>
</reference>
<reference evidence="21" key="3">
    <citation type="submission" date="2015-12" db="EMBL/GenBank/DDBJ databases">
        <title>Update maize B73 reference genome by single molecule sequencing technologies.</title>
        <authorList>
            <consortium name="Maize Genome Sequencing Project"/>
            <person name="Ware D."/>
        </authorList>
    </citation>
    <scope>NUCLEOTIDE SEQUENCE [LARGE SCALE GENOMIC DNA]</scope>
    <source>
        <strain evidence="21">cv. B73</strain>
        <tissue evidence="20">Seedling</tissue>
    </source>
</reference>
<reference key="4">
    <citation type="journal article" date="1992" name="J. Biol. Chem.">
        <title>Identification of an essential tyrosine residue in the catalytic site of a chitinase isolated from Zea mays that is selectively modified during inactivation with 1-ethyl-3-(3-dimethylaminopropyl)-carbodiimide.</title>
        <authorList>
            <person name="Verburg J.G."/>
            <person name="Smith C.E."/>
            <person name="Lisek C.A."/>
            <person name="Huynh Q.K."/>
        </authorList>
    </citation>
    <scope>PROTEIN SEQUENCE OF 180-195</scope>
    <scope>ACTIVITY REGULATION</scope>
    <source>
        <tissue>Seed</tissue>
    </source>
</reference>
<reference key="5">
    <citation type="journal article" date="2011" name="Mol. Plant Pathol.">
        <title>Modification of recombinant maize ChitA chitinase by fungal chitinase-modifying proteins.</title>
        <authorList>
            <person name="Naumann T.A."/>
        </authorList>
    </citation>
    <scope>PROTEIN SEQUENCE OF 26-28 AND 47-51</scope>
    <scope>FUNCTION</scope>
    <scope>SIGNAL</scope>
    <scope>CLEAVAGE BY S.MAYDIS</scope>
    <scope>MUTAGENESIS OF ALA-47</scope>
</reference>
<reference key="6">
    <citation type="journal article" date="2009" name="Physiol. Mol. Plant Pathol.">
        <title>Maize seed chitinase is modified by a protein secreted by Bipolaris zeicola.</title>
        <authorList>
            <person name="Naumann T.A."/>
            <person name="Wickman D.T."/>
            <person name="Kendra D.F."/>
        </authorList>
    </citation>
    <scope>FUNCTION</scope>
</reference>
<reference key="7">
    <citation type="journal article" date="2014" name="Biochem. J.">
        <title>Polyglycine hydrolases secreted by Pleosporineae fungi that target the linker region of plant class IV chitinases.</title>
        <authorList>
            <person name="Naumann T.A."/>
            <person name="Wicklow D.T."/>
            <person name="Price N.P."/>
        </authorList>
    </citation>
    <scope>FUNCTION</scope>
    <scope>IDENTIFICATION BY MASS SPECTROMETRY</scope>
    <scope>CLEAVAGE BY F.VANETTENII EXTRACELLULAR METALLOPROTEINASE MEP</scope>
</reference>
<reference key="8">
    <citation type="journal article" date="2015" name="Protein Sci.">
        <title>Polyglycine hydrolases: Fungal beta-lactamase-like endoproteases that cleave polyglycine regions within plant class IV chitinases.</title>
        <authorList>
            <person name="Naumann T.A."/>
            <person name="Naldrett M.J."/>
            <person name="Ward T.J."/>
            <person name="Price N.P."/>
        </authorList>
    </citation>
    <scope>FUNCTION</scope>
    <scope>IDENTIFICATION BY MASS SPECTROMETRY</scope>
</reference>
<reference key="9">
    <citation type="journal article" date="2017" name="Allergy">
        <title>Characterization of maize chitinase-A, a tough allergenic molecule.</title>
        <authorList>
            <person name="Volpicella M."/>
            <person name="Leoni C."/>
            <person name="Fanizza I."/>
            <person name="Distaso M."/>
            <person name="Leoni G."/>
            <person name="Farioli L."/>
            <person name="Naumann T."/>
            <person name="Pastorello E."/>
            <person name="Ceci L.R."/>
        </authorList>
    </citation>
    <scope>FUNCTION</scope>
    <scope>CATALYTIC ACTIVITY</scope>
    <scope>BIOPHYSICOCHEMICAL PROPERTIES</scope>
    <scope>SUBCELLULAR LOCATION</scope>
    <scope>ALLERGEN</scope>
</reference>
<reference key="10">
    <citation type="journal article" date="2022" name="Protein Expr. Purif.">
        <title>Production of selenomethionine labeled polyglycine hydrolases in Pichia pastoris.</title>
        <authorList>
            <person name="Naumann T.A."/>
            <person name="Sollenberger K.G."/>
            <person name="Hao G."/>
        </authorList>
    </citation>
    <scope>FUNCTION</scope>
</reference>
<reference key="11">
    <citation type="journal article" date="2023" name="Acta Crystallogr. D Struct. Biol.">
        <title>Crystal structure of a polyglycine hydrolase determined using a RoseTTAFold model.</title>
        <authorList>
            <person name="Dowling N.V."/>
            <person name="Naumann T.A."/>
            <person name="Price N.P.J."/>
            <person name="Rose D.R."/>
        </authorList>
    </citation>
    <scope>FUNCTION</scope>
    <scope>IDENTIFICATION BY MASS SPECTROMETRY</scope>
</reference>
<reference key="12">
    <citation type="journal article" date="2014" name="Protein Sci.">
        <title>Crystallographic structure of ChitA, a glycoside hydrolase family 19, plant class IV chitinase from Zea mays.</title>
        <authorList>
            <person name="Chaudet M.M."/>
            <person name="Naumann T.A."/>
            <person name="Price N.P."/>
            <person name="Rose D.R."/>
        </authorList>
    </citation>
    <scope>X-RAY CRYSTALLOGRAPHY (1.5 ANGSTROMS) OF 86-278 OF MUTANT GLN-144</scope>
    <scope>CATALYTIC ACTIVITY</scope>
    <scope>ACTIVITY REGULATION</scope>
    <scope>DOMAIN</scope>
    <scope>ACTIVE SITES</scope>
    <scope>SITE</scope>
    <scope>DISULFIDE BONDS</scope>
    <scope>MUTAGENESIS OF GLU-144</scope>
</reference>
<dbReference type="EC" id="3.2.1.14" evidence="3 4 6 9"/>
<dbReference type="EMBL" id="M84164">
    <property type="protein sequence ID" value="AAA33444.1"/>
    <property type="molecule type" value="Genomic_DNA"/>
</dbReference>
<dbReference type="EMBL" id="BT040514">
    <property type="protein sequence ID" value="ACF85519.1"/>
    <property type="molecule type" value="mRNA"/>
</dbReference>
<dbReference type="EMBL" id="BT043397">
    <property type="protein sequence ID" value="ACF88402.1"/>
    <property type="molecule type" value="mRNA"/>
</dbReference>
<dbReference type="EMBL" id="CM007648">
    <property type="protein sequence ID" value="ONM16329.1"/>
    <property type="molecule type" value="Genomic_DNA"/>
</dbReference>
<dbReference type="PIR" id="A42424">
    <property type="entry name" value="A42424"/>
</dbReference>
<dbReference type="RefSeq" id="NP_001158904.1">
    <property type="nucleotide sequence ID" value="NM_001165432.1"/>
</dbReference>
<dbReference type="PDB" id="4MCK">
    <property type="method" value="X-ray"/>
    <property type="resolution" value="1.50 A"/>
    <property type="chains" value="A=86-278"/>
</dbReference>
<dbReference type="PDBsum" id="4MCK"/>
<dbReference type="SMR" id="P29022"/>
<dbReference type="FunCoup" id="P29022">
    <property type="interactions" value="153"/>
</dbReference>
<dbReference type="IntAct" id="P29022">
    <property type="interactions" value="5"/>
</dbReference>
<dbReference type="STRING" id="4577.P29022"/>
<dbReference type="Allergome" id="11981">
    <property type="allergen name" value="Zea m 8.0101"/>
</dbReference>
<dbReference type="Allergome" id="7663">
    <property type="allergen name" value="Zea m 8"/>
</dbReference>
<dbReference type="CAZy" id="CBM18">
    <property type="family name" value="Carbohydrate-Binding Module Family 18"/>
</dbReference>
<dbReference type="CAZy" id="GH19">
    <property type="family name" value="Glycoside Hydrolase Family 19"/>
</dbReference>
<dbReference type="PaxDb" id="4577-GRMZM2G051943_P01"/>
<dbReference type="EnsemblPlants" id="Zm00001eb078730_T001">
    <property type="protein sequence ID" value="Zm00001eb078730_P001"/>
    <property type="gene ID" value="Zm00001eb078730"/>
</dbReference>
<dbReference type="GeneID" id="100283098"/>
<dbReference type="Gramene" id="Zm00001eb078730_T001">
    <property type="protein sequence ID" value="Zm00001eb078730_P001"/>
    <property type="gene ID" value="Zm00001eb078730"/>
</dbReference>
<dbReference type="KEGG" id="zma:100283098"/>
<dbReference type="MaizeGDB" id="25130"/>
<dbReference type="eggNOG" id="KOG4742">
    <property type="taxonomic scope" value="Eukaryota"/>
</dbReference>
<dbReference type="HOGENOM" id="CLU_045506_1_1_1"/>
<dbReference type="InParanoid" id="P29022"/>
<dbReference type="OMA" id="VTEYPCA"/>
<dbReference type="OrthoDB" id="5985073at2759"/>
<dbReference type="BRENDA" id="3.2.1.14">
    <property type="organism ID" value="6752"/>
</dbReference>
<dbReference type="SABIO-RK" id="P29022"/>
<dbReference type="EvolutionaryTrace" id="P29022"/>
<dbReference type="Proteomes" id="UP000007305">
    <property type="component" value="Chromosome 2"/>
</dbReference>
<dbReference type="ExpressionAtlas" id="P29022">
    <property type="expression patterns" value="baseline and differential"/>
</dbReference>
<dbReference type="GO" id="GO:0005576">
    <property type="term" value="C:extracellular region"/>
    <property type="evidence" value="ECO:0000314"/>
    <property type="project" value="UniProtKB"/>
</dbReference>
<dbReference type="GO" id="GO:0008061">
    <property type="term" value="F:chitin binding"/>
    <property type="evidence" value="ECO:0007669"/>
    <property type="project" value="UniProtKB-KW"/>
</dbReference>
<dbReference type="GO" id="GO:0004568">
    <property type="term" value="F:chitinase activity"/>
    <property type="evidence" value="ECO:0000318"/>
    <property type="project" value="GO_Central"/>
</dbReference>
<dbReference type="GO" id="GO:0008843">
    <property type="term" value="F:endochitinase activity"/>
    <property type="evidence" value="ECO:0000314"/>
    <property type="project" value="UniProtKB"/>
</dbReference>
<dbReference type="GO" id="GO:0006040">
    <property type="term" value="P:amino sugar metabolic process"/>
    <property type="evidence" value="ECO:0000314"/>
    <property type="project" value="UniProtKB"/>
</dbReference>
<dbReference type="GO" id="GO:0016998">
    <property type="term" value="P:cell wall macromolecule catabolic process"/>
    <property type="evidence" value="ECO:0007669"/>
    <property type="project" value="InterPro"/>
</dbReference>
<dbReference type="GO" id="GO:0006032">
    <property type="term" value="P:chitin catabolic process"/>
    <property type="evidence" value="ECO:0007669"/>
    <property type="project" value="UniProtKB-KW"/>
</dbReference>
<dbReference type="GO" id="GO:0050832">
    <property type="term" value="P:defense response to fungus"/>
    <property type="evidence" value="ECO:0000314"/>
    <property type="project" value="UniProtKB"/>
</dbReference>
<dbReference type="GO" id="GO:0000272">
    <property type="term" value="P:polysaccharide catabolic process"/>
    <property type="evidence" value="ECO:0007669"/>
    <property type="project" value="UniProtKB-KW"/>
</dbReference>
<dbReference type="CDD" id="cd00325">
    <property type="entry name" value="chitinase_GH19"/>
    <property type="match status" value="1"/>
</dbReference>
<dbReference type="CDD" id="cd00035">
    <property type="entry name" value="ChtBD1"/>
    <property type="match status" value="1"/>
</dbReference>
<dbReference type="FunFam" id="3.30.60.10:FF:000002">
    <property type="entry name" value="Chitinase B"/>
    <property type="match status" value="1"/>
</dbReference>
<dbReference type="FunFam" id="3.30.20.10:FF:000001">
    <property type="entry name" value="Endochitinase (Chitinase)"/>
    <property type="match status" value="1"/>
</dbReference>
<dbReference type="Gene3D" id="1.10.530.10">
    <property type="match status" value="1"/>
</dbReference>
<dbReference type="Gene3D" id="3.30.20.10">
    <property type="entry name" value="Endochitinase, domain 2"/>
    <property type="match status" value="1"/>
</dbReference>
<dbReference type="Gene3D" id="3.30.60.10">
    <property type="entry name" value="Endochitinase-like"/>
    <property type="match status" value="1"/>
</dbReference>
<dbReference type="InterPro" id="IPR001002">
    <property type="entry name" value="Chitin-bd_1"/>
</dbReference>
<dbReference type="InterPro" id="IPR018371">
    <property type="entry name" value="Chitin-binding_1_CS"/>
</dbReference>
<dbReference type="InterPro" id="IPR036861">
    <property type="entry name" value="Endochitinase-like_sf"/>
</dbReference>
<dbReference type="InterPro" id="IPR016283">
    <property type="entry name" value="Glyco_hydro_19"/>
</dbReference>
<dbReference type="InterPro" id="IPR000726">
    <property type="entry name" value="Glyco_hydro_19_cat"/>
</dbReference>
<dbReference type="InterPro" id="IPR023346">
    <property type="entry name" value="Lysozyme-like_dom_sf"/>
</dbReference>
<dbReference type="PANTHER" id="PTHR22595">
    <property type="entry name" value="CHITINASE-RELATED"/>
    <property type="match status" value="1"/>
</dbReference>
<dbReference type="PANTHER" id="PTHR22595:SF187">
    <property type="entry name" value="ENDOCHITINASE A"/>
    <property type="match status" value="1"/>
</dbReference>
<dbReference type="Pfam" id="PF00187">
    <property type="entry name" value="Chitin_bind_1"/>
    <property type="match status" value="1"/>
</dbReference>
<dbReference type="Pfam" id="PF00182">
    <property type="entry name" value="Glyco_hydro_19"/>
    <property type="match status" value="2"/>
</dbReference>
<dbReference type="PIRSF" id="PIRSF001060">
    <property type="entry name" value="Endochitinase"/>
    <property type="match status" value="1"/>
</dbReference>
<dbReference type="SMART" id="SM00270">
    <property type="entry name" value="ChtBD1"/>
    <property type="match status" value="1"/>
</dbReference>
<dbReference type="SUPFAM" id="SSF53955">
    <property type="entry name" value="Lysozyme-like"/>
    <property type="match status" value="1"/>
</dbReference>
<dbReference type="SUPFAM" id="SSF57016">
    <property type="entry name" value="Plant lectins/antimicrobial peptides"/>
    <property type="match status" value="1"/>
</dbReference>
<dbReference type="PROSITE" id="PS00026">
    <property type="entry name" value="CHIT_BIND_I_1"/>
    <property type="match status" value="1"/>
</dbReference>
<dbReference type="PROSITE" id="PS50941">
    <property type="entry name" value="CHIT_BIND_I_2"/>
    <property type="match status" value="1"/>
</dbReference>
<dbReference type="PROSITE" id="PS00773">
    <property type="entry name" value="CHITINASE_19_1"/>
    <property type="match status" value="1"/>
</dbReference>
<dbReference type="PROSITE" id="PS00774">
    <property type="entry name" value="CHITINASE_19_2"/>
    <property type="match status" value="1"/>
</dbReference>
<sequence length="280" mass="29212">MANAPRILALGLLALLCAAAGPAAAQNCGCQPNFCCSKFGYCGTTDAYCGDGCQSGPCRSGGGGGGGGGGGGGGSGGANVANVVTDAFFNGIKNQAGSGCEGKNFYTRSAFLSAVNAYPGFAHGGTEVEGKREIAAFFAHVTHETGHFCYISEINKSNAYCDASNRQWPCAAGQKYYGRGPLQISWNYNYGPAGRDIGFNGLADPNRVAQDAVIAFKTALWFWMNNVHRVMPQGFGATIRAINGALECNGNNPAQMNARVGYYKQYCQQLRVDPGPNLTC</sequence>
<protein>
    <recommendedName>
        <fullName evidence="13">Endochitinase A</fullName>
        <ecNumber evidence="3 4 6 9">3.2.1.14</ecNumber>
    </recommendedName>
    <alternativeName>
        <fullName evidence="14">ChitA</fullName>
    </alternativeName>
    <alternativeName>
        <fullName evidence="15">Chitinase-A</fullName>
    </alternativeName>
    <alternativeName>
        <fullName evidence="13">Seed chitinase A</fullName>
    </alternativeName>
    <allergenName evidence="18">Zea m 8</allergenName>
</protein>
<proteinExistence type="evidence at protein level"/>
<accession>P29022</accession>
<accession>B4FTS6</accession>
<gene>
    <name evidence="15" type="primary">CHIA</name>
    <name evidence="16" type="synonym">CTA1</name>
</gene>
<organism>
    <name type="scientific">Zea mays</name>
    <name type="common">Maize</name>
    <dbReference type="NCBI Taxonomy" id="4577"/>
    <lineage>
        <taxon>Eukaryota</taxon>
        <taxon>Viridiplantae</taxon>
        <taxon>Streptophyta</taxon>
        <taxon>Embryophyta</taxon>
        <taxon>Tracheophyta</taxon>
        <taxon>Spermatophyta</taxon>
        <taxon>Magnoliopsida</taxon>
        <taxon>Liliopsida</taxon>
        <taxon>Poales</taxon>
        <taxon>Poaceae</taxon>
        <taxon>PACMAD clade</taxon>
        <taxon>Panicoideae</taxon>
        <taxon>Andropogonodae</taxon>
        <taxon>Andropogoneae</taxon>
        <taxon>Tripsacinae</taxon>
        <taxon>Zea</taxon>
    </lineage>
</organism>
<comment type="function">
    <text evidence="3 5 7 8 9 10 11 12">Defense against chitin-containing fungal pathogens (PubMed:1551872, Ref.6). Hydrolyzes glycol chitin and tetra-N-acetylchitotetraose in vitro (PubMed:28328103). Its action is countered by fungal polyglycine hydrolases and fungalysin, that cleave the chitin-binding domain from the protein (PubMed:21453431, PubMed:24627966, PubMed:25966977, PubMed:35240278, PubMed:36762862, Ref.6).</text>
</comment>
<comment type="catalytic activity">
    <reaction evidence="3 4 6 9">
        <text>Random endo-hydrolysis of N-acetyl-beta-D-glucosaminide (1-&gt;4)-beta-linkages in chitin and chitodextrins.</text>
        <dbReference type="EC" id="3.2.1.14"/>
    </reaction>
</comment>
<comment type="activity regulation">
    <text evidence="4 6">Inactivated by l-ethyl-3-(3-dimethylaminopropyl)carbodiimide (EDC) in the absence of exogenous nucleophiles (e.g. GlcNAc4, GlcNAc3 and GlcNAc2) (PubMed:1740436). Not inhibited by tetra-N-acetylchitopentaose or modified chitotetraose substrate TMG-chitotriomycin-pMP, containing a free, non-acetylated glucosaminyl residue or a N-trimethylamino glucosamine (TMG) residue at the non-reducing terminus, respectively (PubMed:24616181).</text>
</comment>
<comment type="biophysicochemical properties">
    <kinetics>
        <KM evidence="9">0.97 mM for tetra-N-acetylchitotetraose (at 37 degrees Celsius and pH 6)</KM>
        <KM evidence="9">0.51 mM for tetra-N-acetylchitotetraose (at 37 degrees Celsius and pH 4)</KM>
        <KM evidence="9">1.27 mM for tetra-N-acetylchitotetraose (at 50 degrees Celsius and pH 6)</KM>
        <KM evidence="9">1.29 mM for tetra-N-acetylchitotetraose (at 70 degrees Celsius and pH 6)</KM>
        <text evidence="9">kcat is 56.27 sec(-1) with tetra-N-acetylchitotetraose as substrate (at 37 degrees Celsius and pH 6). kcat is 55.67 sec(-1) with tetra-N-acetylchitotetraose as substrate (at 37 degrees Celsius and pH 4). kcat is 69.01 sec(-1) with tetra-N-acetylchitotetraose as substrate (at 50 degrees Celsius and pH 6). kcat is 53.1 sec(-1) with tetra-N-acetylchitotetraose as substrate (at 70 degrees Celsius and pH 6).</text>
    </kinetics>
    <phDependence>
        <text evidence="9">Active between pH 6-3.</text>
    </phDependence>
    <temperatureDependence>
        <text evidence="9">Active between 50-70 degrees Celsius.</text>
    </temperatureDependence>
</comment>
<comment type="subcellular location">
    <subcellularLocation>
        <location evidence="9">Secreted</location>
    </subcellularLocation>
</comment>
<comment type="domain">
    <text evidence="6">The N-terminal domain is not required for catalytic activity, but it is involved in substrate binding.</text>
</comment>
<comment type="allergen">
    <text evidence="9">Causes an allergic reaction in human. Food allergenic protein which binds IgE from sera of patients allergic to maize.</text>
</comment>
<comment type="miscellaneous">
    <text evidence="3">Maize chitinase B seems to be less active than chitinase A.</text>
</comment>
<comment type="similarity">
    <text evidence="16">Belongs to the glycosyl hydrolase 19 family. Chitinase class IV subfamily.</text>
</comment>